<organism>
    <name type="scientific">Rhizobium etli (strain ATCC 51251 / DSM 11541 / JCM 21823 / NBRC 15573 / CFN 42)</name>
    <dbReference type="NCBI Taxonomy" id="347834"/>
    <lineage>
        <taxon>Bacteria</taxon>
        <taxon>Pseudomonadati</taxon>
        <taxon>Pseudomonadota</taxon>
        <taxon>Alphaproteobacteria</taxon>
        <taxon>Hyphomicrobiales</taxon>
        <taxon>Rhizobiaceae</taxon>
        <taxon>Rhizobium/Agrobacterium group</taxon>
        <taxon>Rhizobium</taxon>
    </lineage>
</organism>
<gene>
    <name evidence="1" type="primary">folD1</name>
    <name type="ordered locus">RHE_CH00694</name>
</gene>
<reference key="1">
    <citation type="journal article" date="2006" name="Proc. Natl. Acad. Sci. U.S.A.">
        <title>The partitioned Rhizobium etli genome: genetic and metabolic redundancy in seven interacting replicons.</title>
        <authorList>
            <person name="Gonzalez V."/>
            <person name="Santamaria R.I."/>
            <person name="Bustos P."/>
            <person name="Hernandez-Gonzalez I."/>
            <person name="Medrano-Soto A."/>
            <person name="Moreno-Hagelsieb G."/>
            <person name="Janga S.C."/>
            <person name="Ramirez M.A."/>
            <person name="Jimenez-Jacinto V."/>
            <person name="Collado-Vides J."/>
            <person name="Davila G."/>
        </authorList>
    </citation>
    <scope>NUCLEOTIDE SEQUENCE [LARGE SCALE GENOMIC DNA]</scope>
    <source>
        <strain>ATCC 51251 / DSM 11541 / JCM 21823 / NBRC 15573 / CFN 42</strain>
    </source>
</reference>
<name>FOLD1_RHIEC</name>
<accession>Q2KCC6</accession>
<sequence length="299" mass="30838">MATVIDGKNVAASVIQTVKSATAALEKASGVTTGLAVIIVGDDPASHAYVGSKSRMAKECGFKSVQHTLPAETTQEELAGLVATLNADPSIHGILVQLPLPKPLDSEPIIQSILPEKDVDGLSVVNAGKLATGDLKTGLVSCTPAGAMVFVRRTHGEDLSGLNAVVIGRSNLFGKPMAQLLLNANATVTIAHSRTKNLAEVCRNADILVAAVGRPEMVKADWVKPGATVIDVGINRVPAPEKGEGKTRLVGDVAFREVSEIASTITPVPGGVGPMTIAMLMANTVIAAHRAAGQTPPQF</sequence>
<dbReference type="EC" id="1.5.1.5" evidence="1"/>
<dbReference type="EC" id="3.5.4.9" evidence="1"/>
<dbReference type="EMBL" id="CP000133">
    <property type="protein sequence ID" value="ABC89510.1"/>
    <property type="molecule type" value="Genomic_DNA"/>
</dbReference>
<dbReference type="RefSeq" id="WP_011424058.1">
    <property type="nucleotide sequence ID" value="NC_007761.1"/>
</dbReference>
<dbReference type="SMR" id="Q2KCC6"/>
<dbReference type="KEGG" id="ret:RHE_CH00694"/>
<dbReference type="eggNOG" id="COG0190">
    <property type="taxonomic scope" value="Bacteria"/>
</dbReference>
<dbReference type="HOGENOM" id="CLU_034045_1_2_5"/>
<dbReference type="OrthoDB" id="9803580at2"/>
<dbReference type="UniPathway" id="UPA00193"/>
<dbReference type="Proteomes" id="UP000001936">
    <property type="component" value="Chromosome"/>
</dbReference>
<dbReference type="GO" id="GO:0005829">
    <property type="term" value="C:cytosol"/>
    <property type="evidence" value="ECO:0007669"/>
    <property type="project" value="TreeGrafter"/>
</dbReference>
<dbReference type="GO" id="GO:0004477">
    <property type="term" value="F:methenyltetrahydrofolate cyclohydrolase activity"/>
    <property type="evidence" value="ECO:0007669"/>
    <property type="project" value="UniProtKB-UniRule"/>
</dbReference>
<dbReference type="GO" id="GO:0004488">
    <property type="term" value="F:methylenetetrahydrofolate dehydrogenase (NADP+) activity"/>
    <property type="evidence" value="ECO:0007669"/>
    <property type="project" value="UniProtKB-UniRule"/>
</dbReference>
<dbReference type="GO" id="GO:0000105">
    <property type="term" value="P:L-histidine biosynthetic process"/>
    <property type="evidence" value="ECO:0007669"/>
    <property type="project" value="UniProtKB-KW"/>
</dbReference>
<dbReference type="GO" id="GO:0009086">
    <property type="term" value="P:methionine biosynthetic process"/>
    <property type="evidence" value="ECO:0007669"/>
    <property type="project" value="UniProtKB-KW"/>
</dbReference>
<dbReference type="GO" id="GO:0006164">
    <property type="term" value="P:purine nucleotide biosynthetic process"/>
    <property type="evidence" value="ECO:0007669"/>
    <property type="project" value="UniProtKB-KW"/>
</dbReference>
<dbReference type="GO" id="GO:0035999">
    <property type="term" value="P:tetrahydrofolate interconversion"/>
    <property type="evidence" value="ECO:0007669"/>
    <property type="project" value="UniProtKB-UniRule"/>
</dbReference>
<dbReference type="CDD" id="cd01080">
    <property type="entry name" value="NAD_bind_m-THF_DH_Cyclohyd"/>
    <property type="match status" value="1"/>
</dbReference>
<dbReference type="FunFam" id="3.40.50.720:FF:000006">
    <property type="entry name" value="Bifunctional protein FolD"/>
    <property type="match status" value="1"/>
</dbReference>
<dbReference type="FunFam" id="3.40.50.10860:FF:000005">
    <property type="entry name" value="C-1-tetrahydrofolate synthase, cytoplasmic, putative"/>
    <property type="match status" value="1"/>
</dbReference>
<dbReference type="Gene3D" id="3.40.50.10860">
    <property type="entry name" value="Leucine Dehydrogenase, chain A, domain 1"/>
    <property type="match status" value="1"/>
</dbReference>
<dbReference type="Gene3D" id="3.40.50.720">
    <property type="entry name" value="NAD(P)-binding Rossmann-like Domain"/>
    <property type="match status" value="1"/>
</dbReference>
<dbReference type="HAMAP" id="MF_01576">
    <property type="entry name" value="THF_DHG_CYH"/>
    <property type="match status" value="1"/>
</dbReference>
<dbReference type="InterPro" id="IPR046346">
    <property type="entry name" value="Aminoacid_DH-like_N_sf"/>
</dbReference>
<dbReference type="InterPro" id="IPR036291">
    <property type="entry name" value="NAD(P)-bd_dom_sf"/>
</dbReference>
<dbReference type="InterPro" id="IPR000672">
    <property type="entry name" value="THF_DH/CycHdrlase"/>
</dbReference>
<dbReference type="InterPro" id="IPR020630">
    <property type="entry name" value="THF_DH/CycHdrlase_cat_dom"/>
</dbReference>
<dbReference type="InterPro" id="IPR020867">
    <property type="entry name" value="THF_DH/CycHdrlase_CS"/>
</dbReference>
<dbReference type="InterPro" id="IPR020631">
    <property type="entry name" value="THF_DH/CycHdrlase_NAD-bd_dom"/>
</dbReference>
<dbReference type="NCBIfam" id="NF010783">
    <property type="entry name" value="PRK14186.1"/>
    <property type="match status" value="1"/>
</dbReference>
<dbReference type="NCBIfam" id="NF010785">
    <property type="entry name" value="PRK14188.1"/>
    <property type="match status" value="1"/>
</dbReference>
<dbReference type="PANTHER" id="PTHR48099:SF5">
    <property type="entry name" value="C-1-TETRAHYDROFOLATE SYNTHASE, CYTOPLASMIC"/>
    <property type="match status" value="1"/>
</dbReference>
<dbReference type="PANTHER" id="PTHR48099">
    <property type="entry name" value="C-1-TETRAHYDROFOLATE SYNTHASE, CYTOPLASMIC-RELATED"/>
    <property type="match status" value="1"/>
</dbReference>
<dbReference type="Pfam" id="PF00763">
    <property type="entry name" value="THF_DHG_CYH"/>
    <property type="match status" value="1"/>
</dbReference>
<dbReference type="Pfam" id="PF02882">
    <property type="entry name" value="THF_DHG_CYH_C"/>
    <property type="match status" value="1"/>
</dbReference>
<dbReference type="PRINTS" id="PR00085">
    <property type="entry name" value="THFDHDRGNASE"/>
</dbReference>
<dbReference type="SUPFAM" id="SSF53223">
    <property type="entry name" value="Aminoacid dehydrogenase-like, N-terminal domain"/>
    <property type="match status" value="1"/>
</dbReference>
<dbReference type="SUPFAM" id="SSF51735">
    <property type="entry name" value="NAD(P)-binding Rossmann-fold domains"/>
    <property type="match status" value="1"/>
</dbReference>
<dbReference type="PROSITE" id="PS00767">
    <property type="entry name" value="THF_DHG_CYH_2"/>
    <property type="match status" value="1"/>
</dbReference>
<protein>
    <recommendedName>
        <fullName evidence="1">Bifunctional protein FolD 1</fullName>
    </recommendedName>
    <domain>
        <recommendedName>
            <fullName evidence="1">Methylenetetrahydrofolate dehydrogenase</fullName>
            <ecNumber evidence="1">1.5.1.5</ecNumber>
        </recommendedName>
    </domain>
    <domain>
        <recommendedName>
            <fullName evidence="1">Methenyltetrahydrofolate cyclohydrolase</fullName>
            <ecNumber evidence="1">3.5.4.9</ecNumber>
        </recommendedName>
    </domain>
</protein>
<comment type="function">
    <text evidence="1">Catalyzes the oxidation of 5,10-methylenetetrahydrofolate to 5,10-methenyltetrahydrofolate and then the hydrolysis of 5,10-methenyltetrahydrofolate to 10-formyltetrahydrofolate.</text>
</comment>
<comment type="catalytic activity">
    <reaction evidence="1">
        <text>(6R)-5,10-methylene-5,6,7,8-tetrahydrofolate + NADP(+) = (6R)-5,10-methenyltetrahydrofolate + NADPH</text>
        <dbReference type="Rhea" id="RHEA:22812"/>
        <dbReference type="ChEBI" id="CHEBI:15636"/>
        <dbReference type="ChEBI" id="CHEBI:57455"/>
        <dbReference type="ChEBI" id="CHEBI:57783"/>
        <dbReference type="ChEBI" id="CHEBI:58349"/>
        <dbReference type="EC" id="1.5.1.5"/>
    </reaction>
</comment>
<comment type="catalytic activity">
    <reaction evidence="1">
        <text>(6R)-5,10-methenyltetrahydrofolate + H2O = (6R)-10-formyltetrahydrofolate + H(+)</text>
        <dbReference type="Rhea" id="RHEA:23700"/>
        <dbReference type="ChEBI" id="CHEBI:15377"/>
        <dbReference type="ChEBI" id="CHEBI:15378"/>
        <dbReference type="ChEBI" id="CHEBI:57455"/>
        <dbReference type="ChEBI" id="CHEBI:195366"/>
        <dbReference type="EC" id="3.5.4.9"/>
    </reaction>
</comment>
<comment type="pathway">
    <text evidence="1">One-carbon metabolism; tetrahydrofolate interconversion.</text>
</comment>
<comment type="subunit">
    <text evidence="1">Homodimer.</text>
</comment>
<comment type="similarity">
    <text evidence="1">Belongs to the tetrahydrofolate dehydrogenase/cyclohydrolase family.</text>
</comment>
<keyword id="KW-0028">Amino-acid biosynthesis</keyword>
<keyword id="KW-0368">Histidine biosynthesis</keyword>
<keyword id="KW-0378">Hydrolase</keyword>
<keyword id="KW-0486">Methionine biosynthesis</keyword>
<keyword id="KW-0511">Multifunctional enzyme</keyword>
<keyword id="KW-0521">NADP</keyword>
<keyword id="KW-0554">One-carbon metabolism</keyword>
<keyword id="KW-0560">Oxidoreductase</keyword>
<keyword id="KW-0658">Purine biosynthesis</keyword>
<keyword id="KW-1185">Reference proteome</keyword>
<feature type="chain" id="PRO_0000268459" description="Bifunctional protein FolD 1">
    <location>
        <begin position="1"/>
        <end position="299"/>
    </location>
</feature>
<feature type="binding site" evidence="1">
    <location>
        <begin position="168"/>
        <end position="170"/>
    </location>
    <ligand>
        <name>NADP(+)</name>
        <dbReference type="ChEBI" id="CHEBI:58349"/>
    </ligand>
</feature>
<feature type="binding site" evidence="1">
    <location>
        <position position="193"/>
    </location>
    <ligand>
        <name>NADP(+)</name>
        <dbReference type="ChEBI" id="CHEBI:58349"/>
    </ligand>
</feature>
<feature type="binding site" evidence="1">
    <location>
        <position position="234"/>
    </location>
    <ligand>
        <name>NADP(+)</name>
        <dbReference type="ChEBI" id="CHEBI:58349"/>
    </ligand>
</feature>
<proteinExistence type="inferred from homology"/>
<evidence type="ECO:0000255" key="1">
    <source>
        <dbReference type="HAMAP-Rule" id="MF_01576"/>
    </source>
</evidence>